<comment type="function">
    <text evidence="2">Component of the ubiquinol-cytochrome c reductase complex (complex III or cytochrome b-c1 complex) that is part of the mitochondrial respiratory chain. The b-c1 complex mediates electron transfer from ubiquinol to cytochrome c. Contributes to the generation of a proton gradient across the mitochondrial membrane that is then used for ATP synthesis.</text>
</comment>
<comment type="cofactor">
    <cofactor evidence="2">
        <name>heme b</name>
        <dbReference type="ChEBI" id="CHEBI:60344"/>
    </cofactor>
    <text evidence="2">Binds 2 heme b groups non-covalently.</text>
</comment>
<comment type="subunit">
    <text evidence="2">The cytochrome bc1 complex contains 11 subunits: 3 respiratory subunits (MT-CYB, CYC1 and UQCRFS1), 2 core proteins (UQCRC1 and UQCRC2) and 6 low-molecular weight proteins (UQCRH/QCR6, UQCRB/QCR7, UQCRQ/QCR8, UQCR10/QCR9, UQCR11/QCR10 and a cleavage product of UQCRFS1). This cytochrome bc1 complex then forms a dimer.</text>
</comment>
<comment type="subcellular location">
    <subcellularLocation>
        <location evidence="2">Mitochondrion inner membrane</location>
        <topology evidence="2">Multi-pass membrane protein</topology>
    </subcellularLocation>
</comment>
<comment type="miscellaneous">
    <text evidence="1">Heme 1 (or BL or b562) is low-potential and absorbs at about 562 nm, and heme 2 (or BH or b566) is high-potential and absorbs at about 566 nm.</text>
</comment>
<comment type="similarity">
    <text evidence="3 4">Belongs to the cytochrome b family.</text>
</comment>
<comment type="caution">
    <text evidence="2">The full-length protein contains only eight transmembrane helices, not nine as predicted by bioinformatics tools.</text>
</comment>
<protein>
    <recommendedName>
        <fullName>Cytochrome b</fullName>
    </recommendedName>
    <alternativeName>
        <fullName>Complex III subunit 3</fullName>
    </alternativeName>
    <alternativeName>
        <fullName>Complex III subunit III</fullName>
    </alternativeName>
    <alternativeName>
        <fullName>Cytochrome b-c1 complex subunit 3</fullName>
    </alternativeName>
    <alternativeName>
        <fullName>Ubiquinol-cytochrome-c reductase complex cytochrome b subunit</fullName>
    </alternativeName>
</protein>
<organism>
    <name type="scientific">Myotis myotis</name>
    <name type="common">Greater mouse-eared bat</name>
    <dbReference type="NCBI Taxonomy" id="51298"/>
    <lineage>
        <taxon>Eukaryota</taxon>
        <taxon>Metazoa</taxon>
        <taxon>Chordata</taxon>
        <taxon>Craniata</taxon>
        <taxon>Vertebrata</taxon>
        <taxon>Euteleostomi</taxon>
        <taxon>Mammalia</taxon>
        <taxon>Eutheria</taxon>
        <taxon>Laurasiatheria</taxon>
        <taxon>Chiroptera</taxon>
        <taxon>Yangochiroptera</taxon>
        <taxon>Vespertilionidae</taxon>
        <taxon>Myotis</taxon>
    </lineage>
</organism>
<feature type="chain" id="PRO_0000061247" description="Cytochrome b">
    <location>
        <begin position="1"/>
        <end position="379"/>
    </location>
</feature>
<feature type="transmembrane region" description="Helical" evidence="2">
    <location>
        <begin position="33"/>
        <end position="53"/>
    </location>
</feature>
<feature type="transmembrane region" description="Helical" evidence="2">
    <location>
        <begin position="77"/>
        <end position="98"/>
    </location>
</feature>
<feature type="transmembrane region" description="Helical" evidence="2">
    <location>
        <begin position="113"/>
        <end position="133"/>
    </location>
</feature>
<feature type="transmembrane region" description="Helical" evidence="2">
    <location>
        <begin position="178"/>
        <end position="198"/>
    </location>
</feature>
<feature type="transmembrane region" description="Helical" evidence="2">
    <location>
        <begin position="226"/>
        <end position="246"/>
    </location>
</feature>
<feature type="transmembrane region" description="Helical" evidence="2">
    <location>
        <begin position="288"/>
        <end position="308"/>
    </location>
</feature>
<feature type="transmembrane region" description="Helical" evidence="2">
    <location>
        <begin position="320"/>
        <end position="340"/>
    </location>
</feature>
<feature type="transmembrane region" description="Helical" evidence="2">
    <location>
        <begin position="347"/>
        <end position="367"/>
    </location>
</feature>
<feature type="binding site" description="axial binding residue" evidence="2">
    <location>
        <position position="83"/>
    </location>
    <ligand>
        <name>heme b</name>
        <dbReference type="ChEBI" id="CHEBI:60344"/>
        <label>b562</label>
    </ligand>
    <ligandPart>
        <name>Fe</name>
        <dbReference type="ChEBI" id="CHEBI:18248"/>
    </ligandPart>
</feature>
<feature type="binding site" description="axial binding residue" evidence="2">
    <location>
        <position position="97"/>
    </location>
    <ligand>
        <name>heme b</name>
        <dbReference type="ChEBI" id="CHEBI:60344"/>
        <label>b566</label>
    </ligand>
    <ligandPart>
        <name>Fe</name>
        <dbReference type="ChEBI" id="CHEBI:18248"/>
    </ligandPart>
</feature>
<feature type="binding site" description="axial binding residue" evidence="2">
    <location>
        <position position="182"/>
    </location>
    <ligand>
        <name>heme b</name>
        <dbReference type="ChEBI" id="CHEBI:60344"/>
        <label>b562</label>
    </ligand>
    <ligandPart>
        <name>Fe</name>
        <dbReference type="ChEBI" id="CHEBI:18248"/>
    </ligandPart>
</feature>
<feature type="binding site" description="axial binding residue" evidence="2">
    <location>
        <position position="196"/>
    </location>
    <ligand>
        <name>heme b</name>
        <dbReference type="ChEBI" id="CHEBI:60344"/>
        <label>b566</label>
    </ligand>
    <ligandPart>
        <name>Fe</name>
        <dbReference type="ChEBI" id="CHEBI:18248"/>
    </ligandPart>
</feature>
<feature type="binding site" evidence="2">
    <location>
        <position position="201"/>
    </location>
    <ligand>
        <name>a ubiquinone</name>
        <dbReference type="ChEBI" id="CHEBI:16389"/>
    </ligand>
</feature>
<keyword id="KW-0249">Electron transport</keyword>
<keyword id="KW-0349">Heme</keyword>
<keyword id="KW-0408">Iron</keyword>
<keyword id="KW-0472">Membrane</keyword>
<keyword id="KW-0479">Metal-binding</keyword>
<keyword id="KW-0496">Mitochondrion</keyword>
<keyword id="KW-0999">Mitochondrion inner membrane</keyword>
<keyword id="KW-0679">Respiratory chain</keyword>
<keyword id="KW-0812">Transmembrane</keyword>
<keyword id="KW-1133">Transmembrane helix</keyword>
<keyword id="KW-0813">Transport</keyword>
<keyword id="KW-0830">Ubiquinone</keyword>
<reference key="1">
    <citation type="journal article" date="2001" name="Mol. Phylogenet. Evol.">
        <title>Molecular systematics of bats of the genus Myotis (Vespertilionidae) suggests deterministic ecomorphological convergences.</title>
        <authorList>
            <person name="Ruedi M."/>
            <person name="Mayer F."/>
        </authorList>
    </citation>
    <scope>NUCLEOTIDE SEQUENCE [GENOMIC DNA]</scope>
    <source>
        <strain>Isolate ER 1312</strain>
    </source>
</reference>
<gene>
    <name type="primary">MT-CYB</name>
    <name type="synonym">COB</name>
    <name type="synonym">CYTB</name>
    <name type="synonym">MTCYB</name>
</gene>
<sequence>MTNIRKSHPXMKIIXXSFIDLPAPSNISSWWNFGSLLGICLALQILTGLFLAMHYTSDTATAFNSVTHICRDVNYGWVLRYLHANGASMFFICLYLHVGRGLYYGSYMYTETWNVGVILLFAVMATAFMGYVLPWGQMSFWGATVITNLLSAIPYIGTNLVKWIWGGFSVDKATLTRFFAFHFLLPFIISAMVMVHLLFLHETGSNNPTGIPSNMDMIPFHPYYTIKDILGLLLMITVLLMLVLFSPDMLGDPDNYTPANPLNTPPHIKPEWYFLFAYAILRSIPNKLGGVLALVLSILILIIIPLLHTSKQRSMAFRPLSQCLFWLLVADLFTXTWIGGQPVEHPYIIIGQLASILYFSIIIILMPXISFAENHLLKW</sequence>
<geneLocation type="mitochondrion"/>
<accession>Q957A2</accession>
<dbReference type="EMBL" id="AF376860">
    <property type="protein sequence ID" value="AAK57679.1"/>
    <property type="molecule type" value="Genomic_DNA"/>
</dbReference>
<dbReference type="VEuPathDB" id="HostDB:AZ310_gp01"/>
<dbReference type="GO" id="GO:0005743">
    <property type="term" value="C:mitochondrial inner membrane"/>
    <property type="evidence" value="ECO:0007669"/>
    <property type="project" value="UniProtKB-SubCell"/>
</dbReference>
<dbReference type="GO" id="GO:0045275">
    <property type="term" value="C:respiratory chain complex III"/>
    <property type="evidence" value="ECO:0007669"/>
    <property type="project" value="InterPro"/>
</dbReference>
<dbReference type="GO" id="GO:0046872">
    <property type="term" value="F:metal ion binding"/>
    <property type="evidence" value="ECO:0007669"/>
    <property type="project" value="UniProtKB-KW"/>
</dbReference>
<dbReference type="GO" id="GO:0008121">
    <property type="term" value="F:ubiquinol-cytochrome-c reductase activity"/>
    <property type="evidence" value="ECO:0007669"/>
    <property type="project" value="InterPro"/>
</dbReference>
<dbReference type="GO" id="GO:0006122">
    <property type="term" value="P:mitochondrial electron transport, ubiquinol to cytochrome c"/>
    <property type="evidence" value="ECO:0007669"/>
    <property type="project" value="TreeGrafter"/>
</dbReference>
<dbReference type="CDD" id="cd00290">
    <property type="entry name" value="cytochrome_b_C"/>
    <property type="match status" value="1"/>
</dbReference>
<dbReference type="CDD" id="cd00284">
    <property type="entry name" value="Cytochrome_b_N"/>
    <property type="match status" value="1"/>
</dbReference>
<dbReference type="FunFam" id="1.20.810.10:FF:000002">
    <property type="entry name" value="Cytochrome b"/>
    <property type="match status" value="1"/>
</dbReference>
<dbReference type="Gene3D" id="1.20.810.10">
    <property type="entry name" value="Cytochrome Bc1 Complex, Chain C"/>
    <property type="match status" value="1"/>
</dbReference>
<dbReference type="InterPro" id="IPR005798">
    <property type="entry name" value="Cyt_b/b6_C"/>
</dbReference>
<dbReference type="InterPro" id="IPR036150">
    <property type="entry name" value="Cyt_b/b6_C_sf"/>
</dbReference>
<dbReference type="InterPro" id="IPR005797">
    <property type="entry name" value="Cyt_b/b6_N"/>
</dbReference>
<dbReference type="InterPro" id="IPR027387">
    <property type="entry name" value="Cytb/b6-like_sf"/>
</dbReference>
<dbReference type="InterPro" id="IPR030689">
    <property type="entry name" value="Cytochrome_b"/>
</dbReference>
<dbReference type="InterPro" id="IPR048260">
    <property type="entry name" value="Cytochrome_b_C_euk/bac"/>
</dbReference>
<dbReference type="InterPro" id="IPR048259">
    <property type="entry name" value="Cytochrome_b_N_euk/bac"/>
</dbReference>
<dbReference type="InterPro" id="IPR016174">
    <property type="entry name" value="Di-haem_cyt_TM"/>
</dbReference>
<dbReference type="PANTHER" id="PTHR19271">
    <property type="entry name" value="CYTOCHROME B"/>
    <property type="match status" value="1"/>
</dbReference>
<dbReference type="PANTHER" id="PTHR19271:SF16">
    <property type="entry name" value="CYTOCHROME B"/>
    <property type="match status" value="1"/>
</dbReference>
<dbReference type="Pfam" id="PF00032">
    <property type="entry name" value="Cytochrom_B_C"/>
    <property type="match status" value="1"/>
</dbReference>
<dbReference type="Pfam" id="PF00033">
    <property type="entry name" value="Cytochrome_B"/>
    <property type="match status" value="1"/>
</dbReference>
<dbReference type="PIRSF" id="PIRSF038885">
    <property type="entry name" value="COB"/>
    <property type="match status" value="1"/>
</dbReference>
<dbReference type="SUPFAM" id="SSF81648">
    <property type="entry name" value="a domain/subunit of cytochrome bc1 complex (Ubiquinol-cytochrome c reductase)"/>
    <property type="match status" value="1"/>
</dbReference>
<dbReference type="SUPFAM" id="SSF81342">
    <property type="entry name" value="Transmembrane di-heme cytochromes"/>
    <property type="match status" value="1"/>
</dbReference>
<dbReference type="PROSITE" id="PS51003">
    <property type="entry name" value="CYTB_CTER"/>
    <property type="match status" value="1"/>
</dbReference>
<dbReference type="PROSITE" id="PS51002">
    <property type="entry name" value="CYTB_NTER"/>
    <property type="match status" value="1"/>
</dbReference>
<proteinExistence type="inferred from homology"/>
<evidence type="ECO:0000250" key="1"/>
<evidence type="ECO:0000250" key="2">
    <source>
        <dbReference type="UniProtKB" id="P00157"/>
    </source>
</evidence>
<evidence type="ECO:0000255" key="3">
    <source>
        <dbReference type="PROSITE-ProRule" id="PRU00967"/>
    </source>
</evidence>
<evidence type="ECO:0000255" key="4">
    <source>
        <dbReference type="PROSITE-ProRule" id="PRU00968"/>
    </source>
</evidence>
<name>CYB_MYOMY</name>